<proteinExistence type="inferred from homology"/>
<gene>
    <name type="primary">AIM46</name>
    <name type="synonym">FMP34</name>
    <name type="ORF">SCY_2589</name>
</gene>
<evidence type="ECO:0000250" key="1"/>
<evidence type="ECO:0000255" key="2"/>
<evidence type="ECO:0000305" key="3"/>
<organism>
    <name type="scientific">Saccharomyces cerevisiae (strain YJM789)</name>
    <name type="common">Baker's yeast</name>
    <dbReference type="NCBI Taxonomy" id="307796"/>
    <lineage>
        <taxon>Eukaryota</taxon>
        <taxon>Fungi</taxon>
        <taxon>Dikarya</taxon>
        <taxon>Ascomycota</taxon>
        <taxon>Saccharomycotina</taxon>
        <taxon>Saccharomycetes</taxon>
        <taxon>Saccharomycetales</taxon>
        <taxon>Saccharomycetaceae</taxon>
        <taxon>Saccharomyces</taxon>
    </lineage>
</organism>
<dbReference type="EMBL" id="AAFW02000082">
    <property type="protein sequence ID" value="EDN62436.1"/>
    <property type="molecule type" value="Genomic_DNA"/>
</dbReference>
<dbReference type="SMR" id="A6ZTA5"/>
<dbReference type="HOGENOM" id="CLU_038840_0_1_1"/>
<dbReference type="OrthoDB" id="11535at4893"/>
<dbReference type="Proteomes" id="UP000007060">
    <property type="component" value="Unassembled WGS sequence"/>
</dbReference>
<dbReference type="GO" id="GO:0005739">
    <property type="term" value="C:mitochondrion"/>
    <property type="evidence" value="ECO:0007669"/>
    <property type="project" value="UniProtKB-SubCell"/>
</dbReference>
<dbReference type="GO" id="GO:0016872">
    <property type="term" value="F:intramolecular lyase activity"/>
    <property type="evidence" value="ECO:0007669"/>
    <property type="project" value="InterPro"/>
</dbReference>
<dbReference type="Gene3D" id="3.50.70.10">
    <property type="match status" value="1"/>
</dbReference>
<dbReference type="InterPro" id="IPR016087">
    <property type="entry name" value="Chalcone_isomerase"/>
</dbReference>
<dbReference type="InterPro" id="IPR016088">
    <property type="entry name" value="Chalcone_isomerase_3-sand"/>
</dbReference>
<dbReference type="InterPro" id="IPR036298">
    <property type="entry name" value="Chalcone_isomerase_sf"/>
</dbReference>
<dbReference type="Pfam" id="PF16035">
    <property type="entry name" value="Chalcone_2"/>
    <property type="match status" value="1"/>
</dbReference>
<dbReference type="SUPFAM" id="SSF54626">
    <property type="entry name" value="Chalcone isomerase"/>
    <property type="match status" value="1"/>
</dbReference>
<accession>A6ZTA5</accession>
<name>AIM46_YEAS7</name>
<reference key="1">
    <citation type="journal article" date="2007" name="Proc. Natl. Acad. Sci. U.S.A.">
        <title>Genome sequencing and comparative analysis of Saccharomyces cerevisiae strain YJM789.</title>
        <authorList>
            <person name="Wei W."/>
            <person name="McCusker J.H."/>
            <person name="Hyman R.W."/>
            <person name="Jones T."/>
            <person name="Ning Y."/>
            <person name="Cao Z."/>
            <person name="Gu Z."/>
            <person name="Bruno D."/>
            <person name="Miranda M."/>
            <person name="Nguyen M."/>
            <person name="Wilhelmy J."/>
            <person name="Komp C."/>
            <person name="Tamse R."/>
            <person name="Wang X."/>
            <person name="Jia P."/>
            <person name="Luedi P."/>
            <person name="Oefner P.J."/>
            <person name="David L."/>
            <person name="Dietrich F.S."/>
            <person name="Li Y."/>
            <person name="Davis R.W."/>
            <person name="Steinmetz L.M."/>
        </authorList>
    </citation>
    <scope>NUCLEOTIDE SEQUENCE [LARGE SCALE GENOMIC DNA]</scope>
    <source>
        <strain>YJM789</strain>
    </source>
</reference>
<comment type="subcellular location">
    <subcellularLocation>
        <location evidence="1">Mitochondrion</location>
    </subcellularLocation>
</comment>
<comment type="similarity">
    <text evidence="3">Belongs to the AIM18/AIM46 family.</text>
</comment>
<keyword id="KW-0496">Mitochondrion</keyword>
<keyword id="KW-0809">Transit peptide</keyword>
<feature type="transit peptide" description="Mitochondrion" evidence="2">
    <location>
        <begin position="1"/>
        <end position="20"/>
    </location>
</feature>
<feature type="chain" id="PRO_0000399564" description="Altered inheritance of mitochondria protein 46, mitochondrial">
    <location>
        <begin position="21"/>
        <end position="310"/>
    </location>
</feature>
<protein>
    <recommendedName>
        <fullName>Altered inheritance of mitochondria protein 46, mitochondrial</fullName>
    </recommendedName>
</protein>
<sequence length="310" mass="34141">MRLISKVLVKTNCLEVGMRRAPQWYSHYSTTAGNARVNKKGSKVVPVLTGLALASIFAKKWYDDSQIKKADVTSVAVDASISAFPKKMGPPQWPFSTQYELIGKGVRCVSSITFKAYGLGIYVAAEDKHLVSEVLDSKFLSQAFIDTAAPPSPENSHQDNLRAALNDPAKAPILINNLLDSGIRLMSKNTPIKAGSFKLLMDGTKKSVLKNPDSQSQDKDRLEAGFQELHDCFRSVKGLVARDDDFFIELNKDCSMNLSYYARKKDEFVILGTVKEPLIGKLLFAHYLAAVDPPSPEARKEVIDALVSLS</sequence>